<gene>
    <name evidence="1" type="primary">rlmH</name>
    <name type="ordered locus">Shew_2934</name>
</gene>
<keyword id="KW-0963">Cytoplasm</keyword>
<keyword id="KW-0489">Methyltransferase</keyword>
<keyword id="KW-1185">Reference proteome</keyword>
<keyword id="KW-0698">rRNA processing</keyword>
<keyword id="KW-0949">S-adenosyl-L-methionine</keyword>
<keyword id="KW-0808">Transferase</keyword>
<organism>
    <name type="scientific">Shewanella loihica (strain ATCC BAA-1088 / PV-4)</name>
    <dbReference type="NCBI Taxonomy" id="323850"/>
    <lineage>
        <taxon>Bacteria</taxon>
        <taxon>Pseudomonadati</taxon>
        <taxon>Pseudomonadota</taxon>
        <taxon>Gammaproteobacteria</taxon>
        <taxon>Alteromonadales</taxon>
        <taxon>Shewanellaceae</taxon>
        <taxon>Shewanella</taxon>
    </lineage>
</organism>
<evidence type="ECO:0000255" key="1">
    <source>
        <dbReference type="HAMAP-Rule" id="MF_00658"/>
    </source>
</evidence>
<proteinExistence type="inferred from homology"/>
<sequence length="156" mass="17491">MKLQLVAVGTRMPAWVTTGFEEYQRRFPRDMAFELIEIPAGKRGKNADIARILQKEGEQMLAAIPKGNHIVSLDLPGKNWTTPELATQLNRWQLDGRDVSLLIGGPEGLAPACKQAANQSWCLSALTLPHPLVRVLVAESLYRAWSINNNHPYHRE</sequence>
<protein>
    <recommendedName>
        <fullName evidence="1">Ribosomal RNA large subunit methyltransferase H</fullName>
        <ecNumber evidence="1">2.1.1.177</ecNumber>
    </recommendedName>
    <alternativeName>
        <fullName evidence="1">23S rRNA (pseudouridine1915-N3)-methyltransferase</fullName>
    </alternativeName>
    <alternativeName>
        <fullName evidence="1">23S rRNA m3Psi1915 methyltransferase</fullName>
    </alternativeName>
    <alternativeName>
        <fullName evidence="1">rRNA (pseudouridine-N3-)-methyltransferase RlmH</fullName>
    </alternativeName>
</protein>
<dbReference type="EC" id="2.1.1.177" evidence="1"/>
<dbReference type="EMBL" id="CP000606">
    <property type="protein sequence ID" value="ABO24800.1"/>
    <property type="molecule type" value="Genomic_DNA"/>
</dbReference>
<dbReference type="RefSeq" id="WP_011866731.1">
    <property type="nucleotide sequence ID" value="NC_009092.1"/>
</dbReference>
<dbReference type="SMR" id="A3QH52"/>
<dbReference type="STRING" id="323850.Shew_2934"/>
<dbReference type="KEGG" id="slo:Shew_2934"/>
<dbReference type="eggNOG" id="COG1576">
    <property type="taxonomic scope" value="Bacteria"/>
</dbReference>
<dbReference type="HOGENOM" id="CLU_100552_1_0_6"/>
<dbReference type="OrthoDB" id="9806643at2"/>
<dbReference type="Proteomes" id="UP000001558">
    <property type="component" value="Chromosome"/>
</dbReference>
<dbReference type="GO" id="GO:0005737">
    <property type="term" value="C:cytoplasm"/>
    <property type="evidence" value="ECO:0007669"/>
    <property type="project" value="UniProtKB-SubCell"/>
</dbReference>
<dbReference type="GO" id="GO:0070038">
    <property type="term" value="F:rRNA (pseudouridine-N3-)-methyltransferase activity"/>
    <property type="evidence" value="ECO:0007669"/>
    <property type="project" value="UniProtKB-UniRule"/>
</dbReference>
<dbReference type="CDD" id="cd18081">
    <property type="entry name" value="RlmH-like"/>
    <property type="match status" value="1"/>
</dbReference>
<dbReference type="Gene3D" id="3.40.1280.10">
    <property type="match status" value="1"/>
</dbReference>
<dbReference type="HAMAP" id="MF_00658">
    <property type="entry name" value="23SrRNA_methyltr_H"/>
    <property type="match status" value="1"/>
</dbReference>
<dbReference type="InterPro" id="IPR029028">
    <property type="entry name" value="Alpha/beta_knot_MTases"/>
</dbReference>
<dbReference type="InterPro" id="IPR003742">
    <property type="entry name" value="RlmH-like"/>
</dbReference>
<dbReference type="InterPro" id="IPR029026">
    <property type="entry name" value="tRNA_m1G_MTases_N"/>
</dbReference>
<dbReference type="NCBIfam" id="NF000984">
    <property type="entry name" value="PRK00103.1-1"/>
    <property type="match status" value="1"/>
</dbReference>
<dbReference type="NCBIfam" id="NF000986">
    <property type="entry name" value="PRK00103.1-4"/>
    <property type="match status" value="1"/>
</dbReference>
<dbReference type="NCBIfam" id="TIGR00246">
    <property type="entry name" value="tRNA_RlmH_YbeA"/>
    <property type="match status" value="1"/>
</dbReference>
<dbReference type="PANTHER" id="PTHR33603">
    <property type="entry name" value="METHYLTRANSFERASE"/>
    <property type="match status" value="1"/>
</dbReference>
<dbReference type="PANTHER" id="PTHR33603:SF1">
    <property type="entry name" value="RIBOSOMAL RNA LARGE SUBUNIT METHYLTRANSFERASE H"/>
    <property type="match status" value="1"/>
</dbReference>
<dbReference type="Pfam" id="PF02590">
    <property type="entry name" value="SPOUT_MTase"/>
    <property type="match status" value="1"/>
</dbReference>
<dbReference type="PIRSF" id="PIRSF004505">
    <property type="entry name" value="MT_bac"/>
    <property type="match status" value="1"/>
</dbReference>
<dbReference type="SUPFAM" id="SSF75217">
    <property type="entry name" value="alpha/beta knot"/>
    <property type="match status" value="1"/>
</dbReference>
<comment type="function">
    <text evidence="1">Specifically methylates the pseudouridine at position 1915 (m3Psi1915) in 23S rRNA.</text>
</comment>
<comment type="catalytic activity">
    <reaction evidence="1">
        <text>pseudouridine(1915) in 23S rRNA + S-adenosyl-L-methionine = N(3)-methylpseudouridine(1915) in 23S rRNA + S-adenosyl-L-homocysteine + H(+)</text>
        <dbReference type="Rhea" id="RHEA:42752"/>
        <dbReference type="Rhea" id="RHEA-COMP:10221"/>
        <dbReference type="Rhea" id="RHEA-COMP:10222"/>
        <dbReference type="ChEBI" id="CHEBI:15378"/>
        <dbReference type="ChEBI" id="CHEBI:57856"/>
        <dbReference type="ChEBI" id="CHEBI:59789"/>
        <dbReference type="ChEBI" id="CHEBI:65314"/>
        <dbReference type="ChEBI" id="CHEBI:74486"/>
        <dbReference type="EC" id="2.1.1.177"/>
    </reaction>
</comment>
<comment type="subunit">
    <text evidence="1">Homodimer.</text>
</comment>
<comment type="subcellular location">
    <subcellularLocation>
        <location evidence="1">Cytoplasm</location>
    </subcellularLocation>
</comment>
<comment type="similarity">
    <text evidence="1">Belongs to the RNA methyltransferase RlmH family.</text>
</comment>
<reference key="1">
    <citation type="submission" date="2007-03" db="EMBL/GenBank/DDBJ databases">
        <title>Complete sequence of Shewanella loihica PV-4.</title>
        <authorList>
            <consortium name="US DOE Joint Genome Institute"/>
            <person name="Copeland A."/>
            <person name="Lucas S."/>
            <person name="Lapidus A."/>
            <person name="Barry K."/>
            <person name="Detter J.C."/>
            <person name="Glavina del Rio T."/>
            <person name="Hammon N."/>
            <person name="Israni S."/>
            <person name="Dalin E."/>
            <person name="Tice H."/>
            <person name="Pitluck S."/>
            <person name="Chain P."/>
            <person name="Malfatti S."/>
            <person name="Shin M."/>
            <person name="Vergez L."/>
            <person name="Schmutz J."/>
            <person name="Larimer F."/>
            <person name="Land M."/>
            <person name="Hauser L."/>
            <person name="Kyrpides N."/>
            <person name="Mikhailova N."/>
            <person name="Romine M.F."/>
            <person name="Serres G."/>
            <person name="Fredrickson J."/>
            <person name="Tiedje J."/>
            <person name="Richardson P."/>
        </authorList>
    </citation>
    <scope>NUCLEOTIDE SEQUENCE [LARGE SCALE GENOMIC DNA]</scope>
    <source>
        <strain>ATCC BAA-1088 / PV-4</strain>
    </source>
</reference>
<name>RLMH_SHELP</name>
<feature type="chain" id="PRO_1000061838" description="Ribosomal RNA large subunit methyltransferase H">
    <location>
        <begin position="1"/>
        <end position="156"/>
    </location>
</feature>
<feature type="binding site" evidence="1">
    <location>
        <position position="73"/>
    </location>
    <ligand>
        <name>S-adenosyl-L-methionine</name>
        <dbReference type="ChEBI" id="CHEBI:59789"/>
    </ligand>
</feature>
<feature type="binding site" evidence="1">
    <location>
        <position position="104"/>
    </location>
    <ligand>
        <name>S-adenosyl-L-methionine</name>
        <dbReference type="ChEBI" id="CHEBI:59789"/>
    </ligand>
</feature>
<feature type="binding site" evidence="1">
    <location>
        <begin position="123"/>
        <end position="128"/>
    </location>
    <ligand>
        <name>S-adenosyl-L-methionine</name>
        <dbReference type="ChEBI" id="CHEBI:59789"/>
    </ligand>
</feature>
<accession>A3QH52</accession>